<accession>A0A0D1CRC9</accession>
<protein>
    <recommendedName>
        <fullName evidence="12">Acetyltransferase MATC1</fullName>
        <ecNumber evidence="4">2.3.1.-</ecNumber>
    </recommendedName>
    <alternativeName>
        <fullName evidence="12">Mannosylerythritol lipids (MELs) biosynthesis cluster protein MAT1</fullName>
    </alternativeName>
</protein>
<organism>
    <name type="scientific">Mycosarcoma maydis</name>
    <name type="common">Corn smut fungus</name>
    <name type="synonym">Ustilago maydis</name>
    <dbReference type="NCBI Taxonomy" id="5270"/>
    <lineage>
        <taxon>Eukaryota</taxon>
        <taxon>Fungi</taxon>
        <taxon>Dikarya</taxon>
        <taxon>Basidiomycota</taxon>
        <taxon>Ustilaginomycotina</taxon>
        <taxon>Ustilaginomycetes</taxon>
        <taxon>Ustilaginales</taxon>
        <taxon>Ustilaginaceae</taxon>
        <taxon>Mycosarcoma</taxon>
    </lineage>
</organism>
<dbReference type="EC" id="2.3.1.-" evidence="4"/>
<dbReference type="EMBL" id="CM003146">
    <property type="protein sequence ID" value="KIS69143.1"/>
    <property type="molecule type" value="Genomic_DNA"/>
</dbReference>
<dbReference type="RefSeq" id="XP_011389465.1">
    <property type="nucleotide sequence ID" value="XM_011391163.1"/>
</dbReference>
<dbReference type="STRING" id="237631.A0A0D1CRC9"/>
<dbReference type="EnsemblFungi" id="KIS69143">
    <property type="protein sequence ID" value="KIS69143"/>
    <property type="gene ID" value="UMAG_03114"/>
</dbReference>
<dbReference type="GeneID" id="23563675"/>
<dbReference type="KEGG" id="uma:UMAG_03114"/>
<dbReference type="VEuPathDB" id="FungiDB:UMAG_03114"/>
<dbReference type="eggNOG" id="ENOG502RJXU">
    <property type="taxonomic scope" value="Eukaryota"/>
</dbReference>
<dbReference type="InParanoid" id="A0A0D1CRC9"/>
<dbReference type="OMA" id="KRCTAFN"/>
<dbReference type="OrthoDB" id="21502at2759"/>
<dbReference type="BioCyc" id="MetaCyc:MONOMER-22101"/>
<dbReference type="Proteomes" id="UP000000561">
    <property type="component" value="Chromosome 7"/>
</dbReference>
<dbReference type="GO" id="GO:0005886">
    <property type="term" value="C:plasma membrane"/>
    <property type="evidence" value="ECO:0007669"/>
    <property type="project" value="UniProtKB-SubCell"/>
</dbReference>
<dbReference type="GO" id="GO:0016747">
    <property type="term" value="F:acyltransferase activity, transferring groups other than amino-acyl groups"/>
    <property type="evidence" value="ECO:0000318"/>
    <property type="project" value="GO_Central"/>
</dbReference>
<dbReference type="Gene3D" id="3.30.559.10">
    <property type="entry name" value="Chloramphenicol acetyltransferase-like domain"/>
    <property type="match status" value="2"/>
</dbReference>
<dbReference type="InterPro" id="IPR023213">
    <property type="entry name" value="CAT-like_dom_sf"/>
</dbReference>
<dbReference type="InterPro" id="IPR050317">
    <property type="entry name" value="Plant_Fungal_Acyltransferase"/>
</dbReference>
<dbReference type="PANTHER" id="PTHR31642:SF294">
    <property type="entry name" value="ACETYLTRANSFERASE MATC1"/>
    <property type="match status" value="1"/>
</dbReference>
<dbReference type="PANTHER" id="PTHR31642">
    <property type="entry name" value="TRICHOTHECENE 3-O-ACETYLTRANSFERASE"/>
    <property type="match status" value="1"/>
</dbReference>
<gene>
    <name evidence="12" type="primary">MAT1</name>
    <name type="ORF">UMAG_03114</name>
</gene>
<evidence type="ECO:0000250" key="1">
    <source>
        <dbReference type="UniProtKB" id="Q70PR7"/>
    </source>
</evidence>
<evidence type="ECO:0000269" key="2">
    <source>
    </source>
</evidence>
<evidence type="ECO:0000269" key="3">
    <source>
    </source>
</evidence>
<evidence type="ECO:0000269" key="4">
    <source>
    </source>
</evidence>
<evidence type="ECO:0000269" key="5">
    <source>
    </source>
</evidence>
<evidence type="ECO:0000269" key="6">
    <source>
    </source>
</evidence>
<evidence type="ECO:0000269" key="7">
    <source>
    </source>
</evidence>
<evidence type="ECO:0000269" key="8">
    <source>
    </source>
</evidence>
<evidence type="ECO:0000269" key="9">
    <source>
    </source>
</evidence>
<evidence type="ECO:0000269" key="10">
    <source ref="2"/>
</evidence>
<evidence type="ECO:0000269" key="11">
    <source ref="9"/>
</evidence>
<evidence type="ECO:0000303" key="12">
    <source>
    </source>
</evidence>
<evidence type="ECO:0000305" key="13"/>
<evidence type="ECO:0000305" key="14">
    <source>
    </source>
</evidence>
<sequence length="534" mass="58994">MKSNVDTVLDGYTSVPVGVLDSTLANTDILTRITLVFPSSLSLSALQESWYALVRSWPILAARVRATPSTPSGLSYLIPTPATLESLETRSRNSASKPLEKHIVLLDQSSRSFSDYHPIVAKAVHSNLDRNNISIGGAPLVEHEKATICSNACTSWKQLIKQDQAFVTAQATKFADATTVTISFSHILGDAFTIKHIFQGWQTALNGQAVQELQDVGKDPFIKYLPKDTNDKKHKKNKKSEPAPDLPLQWFRYGLARKIKLISLLLWEVKVKKPEKTLGQYYIYLPQAKVDELMAQARSDLEQLRSSSATSATERDLNVSTFNVLFAWLLQNIHASTAIKPSKTSSVICIINAKTRPPAGHVPADYPRHQLWGGALGAPLRPLSAAEYVTLPLGQLALHIRESITEQVDPENIRKSVVMALKHSMWKKPSGELLFFSQNPNTYWCGCTEWRSAKFHTIDFSAAATPHHDAIQPTAAPAASVNPVAITTNMETPMTKRNRWALLGEANNGIWFTGGLTANEASNKNGFGRYIFVE</sequence>
<comment type="function">
    <text evidence="2 4 8 9">Acetyltransferase; part of the gene cluster that mediates the biosynthesis of mannosylerythritol lipids (MELs), surface-active substances that enhance the availability of water-insoluble substrates (PubMed:15932999, PubMed:16885300). Mannosylerythritol lipid production is responsible for hemolytic activity of Ustilago maydis (PubMed:15932999). Depending on the number of acetyl groups, mannosylerythritol lipids can be differentiated into MEL A (fully acetylated), MEL B and MEL C (monoacetylated at R-6 and R-4, respectively), and the fully deacetylated MEL D (PubMed:31103599). The first step in the pathway is the generation of mannosylerythritol by the glycosyltransferase EMT1 which catalyzes the transfer of GDP-mannose to the C-4 atom of meso-erythritol (PubMed:15932999). This reaction has to be stereospecific, since only mannosyl-D-erythritol is generated (PubMed:15932999). The produced disaccharide is subsequently acylated with fatty acids of various lengths derived from the peroxisomal beta-oxidation by the peroxisomal acyltransferases MAC1 and MAC2 at positions C-2 and C-3, repectively (PubMed:16885300, PubMed:24835306, PubMed:31103599). The existence of MEL derivatives which carry an acetyl group at C-2 implies that at least MAC1 also accepts acetyl-CoA as a donor (PubMed:15932999). The final step of MEL biosynthesis is the acetylation of the fully acylated mannosylerythritol lipids catalyzed by the acetyl-CoA-dependent acetyltransferase MAT1 (PubMed:16885300). MAT1 displays a relaxed regioselectivity and is able to transfer acetylgroups to both positions C-4 and C-6 of the mannosyl moiety (PubMed:15932999).</text>
</comment>
<comment type="pathway">
    <text evidence="4">Secondary metabolite biosynthesis.</text>
</comment>
<comment type="subcellular location">
    <subcellularLocation>
        <location evidence="8">Cell membrane</location>
        <topology evidence="14">Peripheral membrane protein</topology>
    </subcellularLocation>
</comment>
<comment type="disruption phenotype">
    <text evidence="10">Leads to the secretion of large amounts of deacetylated MEL D.</text>
</comment>
<comment type="biotechnology">
    <text evidence="3 5 6 7 11">MELs not only have high potential as eco-friendly biosurfactants due to their excellent surface activity, but also have attracted considerable recent interest because of thei runique properties, including self-assembly, anti-tumor and cell differentiation induction activities, and moisturizing and hair-repairing properties.</text>
</comment>
<comment type="similarity">
    <text evidence="13">Belongs to the plant acyltransferase family.</text>
</comment>
<proteinExistence type="evidence at protein level"/>
<reference key="1">
    <citation type="journal article" date="2006" name="Nature">
        <title>Insights from the genome of the biotrophic fungal plant pathogen Ustilago maydis.</title>
        <authorList>
            <person name="Kaemper J."/>
            <person name="Kahmann R."/>
            <person name="Boelker M."/>
            <person name="Ma L.-J."/>
            <person name="Brefort T."/>
            <person name="Saville B.J."/>
            <person name="Banuett F."/>
            <person name="Kronstad J.W."/>
            <person name="Gold S.E."/>
            <person name="Mueller O."/>
            <person name="Perlin M.H."/>
            <person name="Woesten H.A.B."/>
            <person name="de Vries R."/>
            <person name="Ruiz-Herrera J."/>
            <person name="Reynaga-Pena C.G."/>
            <person name="Snetselaar K."/>
            <person name="McCann M."/>
            <person name="Perez-Martin J."/>
            <person name="Feldbruegge M."/>
            <person name="Basse C.W."/>
            <person name="Steinberg G."/>
            <person name="Ibeas J.I."/>
            <person name="Holloman W."/>
            <person name="Guzman P."/>
            <person name="Farman M.L."/>
            <person name="Stajich J.E."/>
            <person name="Sentandreu R."/>
            <person name="Gonzalez-Prieto J.M."/>
            <person name="Kennell J.C."/>
            <person name="Molina L."/>
            <person name="Schirawski J."/>
            <person name="Mendoza-Mendoza A."/>
            <person name="Greilinger D."/>
            <person name="Muench K."/>
            <person name="Roessel N."/>
            <person name="Scherer M."/>
            <person name="Vranes M."/>
            <person name="Ladendorf O."/>
            <person name="Vincon V."/>
            <person name="Fuchs U."/>
            <person name="Sandrock B."/>
            <person name="Meng S."/>
            <person name="Ho E.C.H."/>
            <person name="Cahill M.J."/>
            <person name="Boyce K.J."/>
            <person name="Klose J."/>
            <person name="Klosterman S.J."/>
            <person name="Deelstra H.J."/>
            <person name="Ortiz-Castellanos L."/>
            <person name="Li W."/>
            <person name="Sanchez-Alonso P."/>
            <person name="Schreier P.H."/>
            <person name="Haeuser-Hahn I."/>
            <person name="Vaupel M."/>
            <person name="Koopmann E."/>
            <person name="Friedrich G."/>
            <person name="Voss H."/>
            <person name="Schlueter T."/>
            <person name="Margolis J."/>
            <person name="Platt D."/>
            <person name="Swimmer C."/>
            <person name="Gnirke A."/>
            <person name="Chen F."/>
            <person name="Vysotskaia V."/>
            <person name="Mannhaupt G."/>
            <person name="Gueldener U."/>
            <person name="Muensterkoetter M."/>
            <person name="Haase D."/>
            <person name="Oesterheld M."/>
            <person name="Mewes H.-W."/>
            <person name="Mauceli E.W."/>
            <person name="DeCaprio D."/>
            <person name="Wade C.M."/>
            <person name="Butler J."/>
            <person name="Young S.K."/>
            <person name="Jaffe D.B."/>
            <person name="Calvo S.E."/>
            <person name="Nusbaum C."/>
            <person name="Galagan J.E."/>
            <person name="Birren B.W."/>
        </authorList>
    </citation>
    <scope>NUCLEOTIDE SEQUENCE [LARGE SCALE GENOMIC DNA]</scope>
    <source>
        <strain>DSM 14603 / FGSC 9021 / UM521</strain>
    </source>
</reference>
<reference key="2">
    <citation type="submission" date="2014-09" db="EMBL/GenBank/DDBJ databases">
        <authorList>
            <person name="Gueldener U."/>
            <person name="Muensterkoetter M."/>
            <person name="Walter M.C."/>
            <person name="Mannhaupt G."/>
            <person name="Kahmann R."/>
        </authorList>
    </citation>
    <scope>GENOME REANNOTATION</scope>
    <source>
        <strain>DSM 14603 / FGSC 9021 / UM521</strain>
    </source>
</reference>
<reference key="3">
    <citation type="journal article" date="2002" name="J. Biosci. Bioeng.">
        <title>Functions and potential applications of glycolipid biosurfactants--from energy-saving materials to gene delivery carriers.</title>
        <authorList>
            <person name="Kitamoto D."/>
            <person name="Isoda H."/>
            <person name="Nakahara T."/>
        </authorList>
    </citation>
    <scope>BIOTECHNOLOGY</scope>
</reference>
<reference key="4">
    <citation type="journal article" date="2005" name="Appl. Environ. Microbiol.">
        <title>Genetic analysis of biosurfactant production in Ustilago maydis.</title>
        <authorList>
            <person name="Hewald S."/>
            <person name="Josephs K."/>
            <person name="Boelker M."/>
        </authorList>
    </citation>
    <scope>FUNCTION</scope>
</reference>
<reference key="5">
    <citation type="journal article" date="2006" name="Appl. Environ. Microbiol.">
        <title>Identification of a gene cluster for biosynthesis of mannosylerythritol lipids in the basidiomycetous fungus Ustilago maydis.</title>
        <authorList>
            <person name="Hewald S."/>
            <person name="Linne U."/>
            <person name="Scherer M."/>
            <person name="Marahiel M.A."/>
            <person name="Kaemper J."/>
            <person name="Boelker M."/>
        </authorList>
    </citation>
    <scope>FUNCTION</scope>
    <scope>DISRUPTION PHENOTYPE</scope>
    <scope>CATALYTIC ACTIVITY</scope>
    <scope>PATHWAY</scope>
</reference>
<reference key="6">
    <citation type="journal article" date="2007" name="Colloids Surf. B Biointerfaces">
        <title>Kinetic studies on the interactions between glycolipid biosurfactant assembled monolayers and various classes of immunoglobulins using surface plasmon resonance.</title>
        <authorList>
            <person name="Ito S."/>
            <person name="Imura T."/>
            <person name="Fukuoka T."/>
            <person name="Morita T."/>
            <person name="Sakai H."/>
            <person name="Abe M."/>
            <person name="Kitamoto D."/>
        </authorList>
    </citation>
    <scope>BIOTECHNOLOGY</scope>
</reference>
<reference key="7">
    <citation type="journal article" date="2007" name="Langmuir">
        <title>Aqueous-phase behavior of natural glycolipid biosurfactant mannosylerythritol lipid A: sponge, cubic, and lamellar phases.</title>
        <authorList>
            <person name="Imura T."/>
            <person name="Hikosaka Y."/>
            <person name="Worakitkanchanakul W."/>
            <person name="Sakai H."/>
            <person name="Abe M."/>
            <person name="Konishi M."/>
            <person name="Minamikawa H."/>
            <person name="Kitamoto D."/>
        </authorList>
    </citation>
    <scope>BIOTECHNOLOGY</scope>
</reference>
<reference key="8">
    <citation type="journal article" date="2009" name="Biotechnol. Appl. Biochem.">
        <title>Production of glycolipid biosurfactants by basidiomycetous yeasts.</title>
        <authorList>
            <person name="Morita T."/>
            <person name="Fukuoka T."/>
            <person name="Imura T."/>
            <person name="Kitamoto D."/>
        </authorList>
    </citation>
    <scope>BIOTECHNOLOGY</scope>
</reference>
<reference key="9">
    <citation type="journal article" date="2009" name="Curr. Opin. Colloid Interface Sci.">
        <title>Self-assembling properties of glycolipid biosurfactants and their potential applications.</title>
        <authorList>
            <person name="Kitamoto D."/>
            <person name="Morita T."/>
            <person name="Fukuoka T."/>
            <person name="Konishi M."/>
            <person name="Imura T."/>
        </authorList>
    </citation>
    <scope>BIOTECHNOLOGY</scope>
</reference>
<reference key="10">
    <citation type="journal article" date="2014" name="Mol. Microbiol.">
        <title>Peroxisomes contribute to biosynthesis of extracellular glycolipids in fungi.</title>
        <authorList>
            <person name="Freitag J."/>
            <person name="Ast J."/>
            <person name="Linne U."/>
            <person name="Stehlik T."/>
            <person name="Martorana D."/>
            <person name="Boelker M."/>
            <person name="Sandrock B."/>
        </authorList>
    </citation>
    <scope>SUBCELLULAR LOCATION</scope>
    <scope>FUNCTION</scope>
</reference>
<reference key="11">
    <citation type="journal article" date="2019" name="Fungal Genet. Biol.">
        <title>Elucidation of substrate specificities of decorating enzymes involved in mannosylerythritol lipid production by cross-species complementation.</title>
        <authorList>
            <person name="Deinzer H.T."/>
            <person name="Linne U."/>
            <person name="Xie X."/>
            <person name="Boelker M."/>
            <person name="Sandrock B."/>
        </authorList>
    </citation>
    <scope>FUNCTION</scope>
</reference>
<name>MAT1_MYCMD</name>
<feature type="chain" id="PRO_0000449539" description="Acetyltransferase MATC1">
    <location>
        <begin position="1"/>
        <end position="534"/>
    </location>
</feature>
<feature type="active site" description="Proton acceptor" evidence="1">
    <location>
        <position position="186"/>
    </location>
</feature>
<feature type="active site" description="Proton acceptor" evidence="1">
    <location>
        <position position="459"/>
    </location>
</feature>
<keyword id="KW-0012">Acyltransferase</keyword>
<keyword id="KW-1003">Cell membrane</keyword>
<keyword id="KW-0472">Membrane</keyword>
<keyword id="KW-1185">Reference proteome</keyword>
<keyword id="KW-0808">Transferase</keyword>